<protein>
    <recommendedName>
        <fullName evidence="5">Spliceosome-associated protein 130 B</fullName>
        <shortName evidence="5">AtSAP130b</shortName>
        <shortName evidence="5">SAP 130 B</shortName>
    </recommendedName>
    <alternativeName>
        <fullName evidence="4">Pre-mRNA-splicing factor SF3b 130 kDa subunit B</fullName>
        <shortName evidence="4">SF3b130 B</shortName>
    </alternativeName>
</protein>
<sequence>MYLYSLTLQQATGIVCAINGNFSGGKTQEIAVARGKILDLLRPDENGKIQTIHSVEVFGAIRSLAQFRLTGAQKDYIVVGSDSGRIVILEYNKEKNVFDKVHQETFGKSGCRRIVPGQYVAVDPKGRAVMIGACEKQKLVYVLNRDTTARLTISSPLEAHKSHTICYSLCGVDCGFDNPIFAAIELDYSEADQDPTGQAASEAQKHLTFYELDLGLNHVSRKWSNPVDNGANMLVTVPGGADGPSGVLVCAENFVIYMNQGHPDVRAVIPRRTDLPAERGVLVVSAAVHKQKTMFFFLIQTEYGDVFKVTLDHNGDHVSELKVKYFDTIPVASSICVLKLGFLFSASEFGNHGLYQFQAIGEEPDVESSSSNLMETEEGFQPVFFQPRRLKNLVRIDQVESLMPLMDMKVLNIFEEETPQIFSLCGRGPRSSLRILRPGLAITEMAVSQLPGQPSAVWTVKKNVSDEFDAYIVVSFTNATLVLSIGEQVEEVNDSGFLDTTPSLAVSLIGDDSLMQVHPNGIRHIREDGRINEWRTPGKRSIVKVGYNRLQVVIALSGGELIYFEADMTGQLMEVEKHEMSGDVACLDIAPVPEGRKRSRFLAVGSYDNTVRILSLDPDDCLQILSVQSVSSAPESLLFLEVQASIGGDDGADHPANLFLNSGLQNGVLFRTVVDMVTGQLSDSRSRFLGLKPPKLFSISVRGRSAMLCLSSRPWLGYIHRGHFHLTPLSYETLEFAAPFSSDQCAEGVVSVAGDALRIFMIDRLGETFNETVVPLRYTPRKFVLHPKRKLLVIIESDQGAFTAEEREAARKECFEAGGVGENGNGNADQMENGADDEDKEDPLSDEQYGYPKAESEKWVSCIRVLDPKTATTTCLLELQDNEAAYSVCTVNFHDKEYGTLLAVGTVKGMQFWPKKNLVAGFIHIYRFVEDGKSLELLHKTQVEGVPLALCQFQGRLLAGIGPVLRLYDLGKKRLLRKCENKLFPNTIISIQTYRDRIYVGDIQESFHYCKYRRDENQLYIFADDCVPRWLTASHHVDFDTMAGADKFGNVYFVRLPQDLSEEIEEDPTGGKIKWEQGKLNGAPNKVDEIVQFHVGDVVTCLQKASMIPGGSESIMYGTVMGSIGALHAFTSRDDVDFFSHLEMHMRQEYPPLCGRDHMAYRSAYFPVKDVIDGDLCEQFPTLPMDLQRKIADELDRTPAEILKKLEDARNKII</sequence>
<name>S130B_ARATH</name>
<accession>P0DKL6</accession>
<accession>Q570A5</accession>
<accession>Q9LD60</accession>
<reference key="1">
    <citation type="journal article" date="2000" name="Nature">
        <title>Sequence and analysis of chromosome 3 of the plant Arabidopsis thaliana.</title>
        <authorList>
            <person name="Salanoubat M."/>
            <person name="Lemcke K."/>
            <person name="Rieger M."/>
            <person name="Ansorge W."/>
            <person name="Unseld M."/>
            <person name="Fartmann B."/>
            <person name="Valle G."/>
            <person name="Bloecker H."/>
            <person name="Perez-Alonso M."/>
            <person name="Obermaier B."/>
            <person name="Delseny M."/>
            <person name="Boutry M."/>
            <person name="Grivell L.A."/>
            <person name="Mache R."/>
            <person name="Puigdomenech P."/>
            <person name="De Simone V."/>
            <person name="Choisne N."/>
            <person name="Artiguenave F."/>
            <person name="Robert C."/>
            <person name="Brottier P."/>
            <person name="Wincker P."/>
            <person name="Cattolico L."/>
            <person name="Weissenbach J."/>
            <person name="Saurin W."/>
            <person name="Quetier F."/>
            <person name="Schaefer M."/>
            <person name="Mueller-Auer S."/>
            <person name="Gabel C."/>
            <person name="Fuchs M."/>
            <person name="Benes V."/>
            <person name="Wurmbach E."/>
            <person name="Drzonek H."/>
            <person name="Erfle H."/>
            <person name="Jordan N."/>
            <person name="Bangert S."/>
            <person name="Wiedelmann R."/>
            <person name="Kranz H."/>
            <person name="Voss H."/>
            <person name="Holland R."/>
            <person name="Brandt P."/>
            <person name="Nyakatura G."/>
            <person name="Vezzi A."/>
            <person name="D'Angelo M."/>
            <person name="Pallavicini A."/>
            <person name="Toppo S."/>
            <person name="Simionati B."/>
            <person name="Conrad A."/>
            <person name="Hornischer K."/>
            <person name="Kauer G."/>
            <person name="Loehnert T.-H."/>
            <person name="Nordsiek G."/>
            <person name="Reichelt J."/>
            <person name="Scharfe M."/>
            <person name="Schoen O."/>
            <person name="Bargues M."/>
            <person name="Terol J."/>
            <person name="Climent J."/>
            <person name="Navarro P."/>
            <person name="Collado C."/>
            <person name="Perez-Perez A."/>
            <person name="Ottenwaelder B."/>
            <person name="Duchemin D."/>
            <person name="Cooke R."/>
            <person name="Laudie M."/>
            <person name="Berger-Llauro C."/>
            <person name="Purnelle B."/>
            <person name="Masuy D."/>
            <person name="de Haan M."/>
            <person name="Maarse A.C."/>
            <person name="Alcaraz J.-P."/>
            <person name="Cottet A."/>
            <person name="Casacuberta E."/>
            <person name="Monfort A."/>
            <person name="Argiriou A."/>
            <person name="Flores M."/>
            <person name="Liguori R."/>
            <person name="Vitale D."/>
            <person name="Mannhaupt G."/>
            <person name="Haase D."/>
            <person name="Schoof H."/>
            <person name="Rudd S."/>
            <person name="Zaccaria P."/>
            <person name="Mewes H.-W."/>
            <person name="Mayer K.F.X."/>
            <person name="Kaul S."/>
            <person name="Town C.D."/>
            <person name="Koo H.L."/>
            <person name="Tallon L.J."/>
            <person name="Jenkins J."/>
            <person name="Rooney T."/>
            <person name="Rizzo M."/>
            <person name="Walts A."/>
            <person name="Utterback T."/>
            <person name="Fujii C.Y."/>
            <person name="Shea T.P."/>
            <person name="Creasy T.H."/>
            <person name="Haas B."/>
            <person name="Maiti R."/>
            <person name="Wu D."/>
            <person name="Peterson J."/>
            <person name="Van Aken S."/>
            <person name="Pai G."/>
            <person name="Militscher J."/>
            <person name="Sellers P."/>
            <person name="Gill J.E."/>
            <person name="Feldblyum T.V."/>
            <person name="Preuss D."/>
            <person name="Lin X."/>
            <person name="Nierman W.C."/>
            <person name="Salzberg S.L."/>
            <person name="White O."/>
            <person name="Venter J.C."/>
            <person name="Fraser C.M."/>
            <person name="Kaneko T."/>
            <person name="Nakamura Y."/>
            <person name="Sato S."/>
            <person name="Kato T."/>
            <person name="Asamizu E."/>
            <person name="Sasamoto S."/>
            <person name="Kimura T."/>
            <person name="Idesawa K."/>
            <person name="Kawashima K."/>
            <person name="Kishida Y."/>
            <person name="Kiyokawa C."/>
            <person name="Kohara M."/>
            <person name="Matsumoto M."/>
            <person name="Matsuno A."/>
            <person name="Muraki A."/>
            <person name="Nakayama S."/>
            <person name="Nakazaki N."/>
            <person name="Shinpo S."/>
            <person name="Takeuchi C."/>
            <person name="Wada T."/>
            <person name="Watanabe A."/>
            <person name="Yamada M."/>
            <person name="Yasuda M."/>
            <person name="Tabata S."/>
        </authorList>
    </citation>
    <scope>NUCLEOTIDE SEQUENCE [LARGE SCALE GENOMIC DNA]</scope>
    <source>
        <strain>cv. Columbia</strain>
    </source>
</reference>
<reference key="2">
    <citation type="journal article" date="2017" name="Plant J.">
        <title>Araport11: a complete reannotation of the Arabidopsis thaliana reference genome.</title>
        <authorList>
            <person name="Cheng C.Y."/>
            <person name="Krishnakumar V."/>
            <person name="Chan A.P."/>
            <person name="Thibaud-Nissen F."/>
            <person name="Schobel S."/>
            <person name="Town C.D."/>
        </authorList>
    </citation>
    <scope>GENOME REANNOTATION</scope>
    <source>
        <strain>cv. Columbia</strain>
    </source>
</reference>
<reference key="3">
    <citation type="submission" date="2005-03" db="EMBL/GenBank/DDBJ databases">
        <title>Large-scale analysis of RIKEN Arabidopsis full-length (RAFL) cDNAs.</title>
        <authorList>
            <person name="Totoki Y."/>
            <person name="Seki M."/>
            <person name="Ishida J."/>
            <person name="Nakajima M."/>
            <person name="Enju A."/>
            <person name="Kamiya A."/>
            <person name="Narusaka M."/>
            <person name="Shin-i T."/>
            <person name="Nakagawa M."/>
            <person name="Sakamoto N."/>
            <person name="Oishi K."/>
            <person name="Kohara Y."/>
            <person name="Kobayashi M."/>
            <person name="Toyoda A."/>
            <person name="Sakaki Y."/>
            <person name="Sakurai T."/>
            <person name="Iida K."/>
            <person name="Akiyama K."/>
            <person name="Satou M."/>
            <person name="Toyoda T."/>
            <person name="Konagaya A."/>
            <person name="Carninci P."/>
            <person name="Kawai J."/>
            <person name="Hayashizaki Y."/>
            <person name="Shinozaki K."/>
        </authorList>
    </citation>
    <scope>NUCLEOTIDE SEQUENCE [LARGE SCALE MRNA] OF 1050-1214</scope>
    <source>
        <strain>cv. Columbia</strain>
    </source>
</reference>
<reference key="4">
    <citation type="journal article" date="2005" name="RNA">
        <title>Evolutionary conservation of minor U12-type spliceosome between plants and humans.</title>
        <authorList>
            <person name="Lorkovic Z.J."/>
            <person name="Lehner R."/>
            <person name="Forstner C."/>
            <person name="Barta A."/>
        </authorList>
    </citation>
    <scope>GENE FAMILY</scope>
</reference>
<reference key="5">
    <citation type="journal article" date="2011" name="Plant Cell Physiol.">
        <title>AtSAP130/AtSF3b-3 function is required for reproduction in Arabidopsis thaliana.</title>
        <authorList>
            <person name="Aki S."/>
            <person name="Nakai H."/>
            <person name="Aoyama T."/>
            <person name="Oka A."/>
            <person name="Tsuge T."/>
        </authorList>
    </citation>
    <scope>FUNCTION</scope>
    <scope>DISRUPTION PHENOTYPE</scope>
    <scope>TISSUE SPECIFICITY</scope>
    <scope>GENE FAMILY</scope>
    <scope>NOMENCLATURE</scope>
    <source>
        <strain>cv. Columbia</strain>
    </source>
</reference>
<organism>
    <name type="scientific">Arabidopsis thaliana</name>
    <name type="common">Mouse-ear cress</name>
    <dbReference type="NCBI Taxonomy" id="3702"/>
    <lineage>
        <taxon>Eukaryota</taxon>
        <taxon>Viridiplantae</taxon>
        <taxon>Streptophyta</taxon>
        <taxon>Embryophyta</taxon>
        <taxon>Tracheophyta</taxon>
        <taxon>Spermatophyta</taxon>
        <taxon>Magnoliopsida</taxon>
        <taxon>eudicotyledons</taxon>
        <taxon>Gunneridae</taxon>
        <taxon>Pentapetalae</taxon>
        <taxon>rosids</taxon>
        <taxon>malvids</taxon>
        <taxon>Brassicales</taxon>
        <taxon>Brassicaceae</taxon>
        <taxon>Camelineae</taxon>
        <taxon>Arabidopsis</taxon>
    </lineage>
</organism>
<proteinExistence type="evidence at transcript level"/>
<comment type="function">
    <text evidence="1 3">Subunit of the splicing factor SF3B required for 'A' complex assembly formed by the stable binding of U2 snRNP to the branchpoint sequence (BPS) in pre-mRNA. Sequence independent binding of SF3A/SF3B complex upstream of the branch site is essential, it may anchor U2 snRNP to the pre-mRNA. May also be involved in the assembly of the 'E' complex. Also belongs to the minor U12-dependent spliceosome, which is involved in the splicing of rare class of nuclear pre-mRNA intron (By similarity). Required for pollen and ovule development, especially during the transition from microspore to the bicellular stage in pollen development. Involved in the accumulation of QRT1 and QRT3 (PubMed:21680607).</text>
</comment>
<comment type="subunit">
    <text evidence="1">Identified in the spliceosome C complex. Component of the U11/U12 snRNPs that are part of the U12-type spliceosome. Component of splicing factor SF3B complex.</text>
</comment>
<comment type="subcellular location">
    <subcellularLocation>
        <location evidence="1">Nucleus</location>
    </subcellularLocation>
</comment>
<comment type="tissue specificity">
    <text evidence="3">Expressed in roots, leaves, inflorescence and, to a lower extent, in siliques.</text>
</comment>
<comment type="disruption phenotype">
    <text evidence="3">The double mutant sap130a sap130b displays a slight reduction in the size of aerial organs and in the number of lateral roots, and is impaired in reproduction due to a reduced production of viable pollen and impaired female reproductive organs. Defect in the transition from microspore to the bicellular stage in pollen development. Reduced expression of QRT1 and QRT3.</text>
</comment>
<comment type="similarity">
    <text evidence="6">Belongs to the RSE1 family.</text>
</comment>
<feature type="chain" id="PRO_0000439507" description="Spliceosome-associated protein 130 B">
    <location>
        <begin position="1"/>
        <end position="1214"/>
    </location>
</feature>
<feature type="region of interest" description="Disordered" evidence="2">
    <location>
        <begin position="817"/>
        <end position="848"/>
    </location>
</feature>
<feature type="compositionally biased region" description="Acidic residues" evidence="2">
    <location>
        <begin position="834"/>
        <end position="845"/>
    </location>
</feature>
<feature type="sequence conflict" description="In Ref. 3; BAD94072." evidence="6" ref="3">
    <original>C</original>
    <variation>R</variation>
    <location>
        <position position="1154"/>
    </location>
</feature>
<dbReference type="EMBL" id="AL132954">
    <property type="protein sequence ID" value="CAB75756.1"/>
    <property type="molecule type" value="Genomic_DNA"/>
</dbReference>
<dbReference type="EMBL" id="CP002686">
    <property type="protein sequence ID" value="AEE79354.1"/>
    <property type="molecule type" value="Genomic_DNA"/>
</dbReference>
<dbReference type="EMBL" id="AK220805">
    <property type="protein sequence ID" value="BAD94072.1"/>
    <property type="molecule type" value="mRNA"/>
</dbReference>
<dbReference type="PIR" id="T47659">
    <property type="entry name" value="T47659"/>
</dbReference>
<dbReference type="RefSeq" id="NP_567016.1">
    <property type="nucleotide sequence ID" value="NM_115380.3"/>
</dbReference>
<dbReference type="SMR" id="P0DKL6"/>
<dbReference type="FunCoup" id="P0DKL6">
    <property type="interactions" value="4603"/>
</dbReference>
<dbReference type="STRING" id="3702.P0DKL6"/>
<dbReference type="GlyGen" id="P0DKL6">
    <property type="glycosylation" value="1 site"/>
</dbReference>
<dbReference type="EnsemblPlants" id="AT3G55200.1">
    <property type="protein sequence ID" value="AT3G55200.1"/>
    <property type="gene ID" value="AT3G55200"/>
</dbReference>
<dbReference type="EnsemblPlants" id="AT3G55200.2">
    <property type="protein sequence ID" value="AT3G55200.2"/>
    <property type="gene ID" value="AT3G55200"/>
</dbReference>
<dbReference type="EnsemblPlants" id="AT3G55200.3">
    <property type="protein sequence ID" value="AT3G55200.3"/>
    <property type="gene ID" value="AT3G55200"/>
</dbReference>
<dbReference type="EnsemblPlants" id="AT3G55220.1">
    <property type="protein sequence ID" value="AT3G55220.1"/>
    <property type="gene ID" value="AT3G55220"/>
</dbReference>
<dbReference type="GeneID" id="824688"/>
<dbReference type="Gramene" id="AT3G55200.1">
    <property type="protein sequence ID" value="AT3G55200.1"/>
    <property type="gene ID" value="AT3G55200"/>
</dbReference>
<dbReference type="Gramene" id="AT3G55200.2">
    <property type="protein sequence ID" value="AT3G55200.2"/>
    <property type="gene ID" value="AT3G55200"/>
</dbReference>
<dbReference type="Gramene" id="AT3G55200.3">
    <property type="protein sequence ID" value="AT3G55200.3"/>
    <property type="gene ID" value="AT3G55200"/>
</dbReference>
<dbReference type="Gramene" id="AT3G55220.1">
    <property type="protein sequence ID" value="AT3G55220.1"/>
    <property type="gene ID" value="AT3G55220"/>
</dbReference>
<dbReference type="KEGG" id="ath:AT3G55200"/>
<dbReference type="KEGG" id="ath:AT3G55220"/>
<dbReference type="Araport" id="AT3G55220"/>
<dbReference type="TAIR" id="AT3G55220">
    <property type="gene designation" value="SAP130B"/>
</dbReference>
<dbReference type="InParanoid" id="P0DKL6"/>
<dbReference type="OMA" id="PRATGHW"/>
<dbReference type="OrthoDB" id="1041414at2759"/>
<dbReference type="CD-CODE" id="4299E36E">
    <property type="entry name" value="Nucleolus"/>
</dbReference>
<dbReference type="PRO" id="PR:P0DKL6"/>
<dbReference type="Proteomes" id="UP000006548">
    <property type="component" value="Chromosome 3"/>
</dbReference>
<dbReference type="ExpressionAtlas" id="P0DKL6">
    <property type="expression patterns" value="baseline and differential"/>
</dbReference>
<dbReference type="GO" id="GO:0005634">
    <property type="term" value="C:nucleus"/>
    <property type="evidence" value="ECO:0007669"/>
    <property type="project" value="UniProtKB-SubCell"/>
</dbReference>
<dbReference type="GO" id="GO:0003676">
    <property type="term" value="F:nucleic acid binding"/>
    <property type="evidence" value="ECO:0007669"/>
    <property type="project" value="InterPro"/>
</dbReference>
<dbReference type="GO" id="GO:0055046">
    <property type="term" value="P:microgametogenesis"/>
    <property type="evidence" value="ECO:0000315"/>
    <property type="project" value="UniProtKB"/>
</dbReference>
<dbReference type="GO" id="GO:0048481">
    <property type="term" value="P:plant ovule development"/>
    <property type="evidence" value="ECO:0000315"/>
    <property type="project" value="UniProtKB"/>
</dbReference>
<dbReference type="GO" id="GO:0009555">
    <property type="term" value="P:pollen development"/>
    <property type="evidence" value="ECO:0000315"/>
    <property type="project" value="UniProtKB"/>
</dbReference>
<dbReference type="GO" id="GO:0009846">
    <property type="term" value="P:pollen germination"/>
    <property type="evidence" value="ECO:0000315"/>
    <property type="project" value="UniProtKB"/>
</dbReference>
<dbReference type="FunFam" id="1.10.150.910:FF:000002">
    <property type="entry name" value="Splicing factor 3B subunit 3"/>
    <property type="match status" value="1"/>
</dbReference>
<dbReference type="FunFam" id="2.130.10.10:FF:000027">
    <property type="entry name" value="Splicing factor 3B subunit 3"/>
    <property type="match status" value="1"/>
</dbReference>
<dbReference type="FunFam" id="2.130.10.10:FF:000041">
    <property type="entry name" value="Splicing factor 3b subunit 3"/>
    <property type="match status" value="1"/>
</dbReference>
<dbReference type="Gene3D" id="1.10.150.910">
    <property type="match status" value="1"/>
</dbReference>
<dbReference type="Gene3D" id="2.130.10.10">
    <property type="entry name" value="YVTN repeat-like/Quinoprotein amine dehydrogenase"/>
    <property type="match status" value="3"/>
</dbReference>
<dbReference type="InterPro" id="IPR018846">
    <property type="entry name" value="Beta-prop_RSE1/DDB1/CPSF1_1st"/>
</dbReference>
<dbReference type="InterPro" id="IPR004871">
    <property type="entry name" value="Cleavage/polyA-sp_fac_asu_C"/>
</dbReference>
<dbReference type="InterPro" id="IPR011044">
    <property type="entry name" value="Quino_amine_DH_bsu"/>
</dbReference>
<dbReference type="InterPro" id="IPR050358">
    <property type="entry name" value="RSE1/DDB1/CFT1/CPSF1"/>
</dbReference>
<dbReference type="InterPro" id="IPR015943">
    <property type="entry name" value="WD40/YVTN_repeat-like_dom_sf"/>
</dbReference>
<dbReference type="InterPro" id="IPR036322">
    <property type="entry name" value="WD40_repeat_dom_sf"/>
</dbReference>
<dbReference type="PANTHER" id="PTHR10644">
    <property type="entry name" value="DNA REPAIR/RNA PROCESSING CPSF FAMILY"/>
    <property type="match status" value="1"/>
</dbReference>
<dbReference type="Pfam" id="PF10433">
    <property type="entry name" value="Beta-prop_RSE1_1st"/>
    <property type="match status" value="1"/>
</dbReference>
<dbReference type="Pfam" id="PF23726">
    <property type="entry name" value="Beta-prop_RSE1_2nd"/>
    <property type="match status" value="1"/>
</dbReference>
<dbReference type="Pfam" id="PF03178">
    <property type="entry name" value="CPSF_A"/>
    <property type="match status" value="1"/>
</dbReference>
<dbReference type="SUPFAM" id="SSF50978">
    <property type="entry name" value="WD40 repeat-like"/>
    <property type="match status" value="1"/>
</dbReference>
<dbReference type="SUPFAM" id="SSF50969">
    <property type="entry name" value="YVTN repeat-like/Quinoprotein amine dehydrogenase"/>
    <property type="match status" value="1"/>
</dbReference>
<keyword id="KW-0539">Nucleus</keyword>
<keyword id="KW-1185">Reference proteome</keyword>
<gene>
    <name evidence="5" type="primary">SAP130B</name>
    <name evidence="4" type="synonym">SF3b130</name>
    <name evidence="7" type="ordered locus">At3g55220</name>
    <name evidence="8" type="ORF">T26I12.100</name>
</gene>
<evidence type="ECO:0000250" key="1">
    <source>
        <dbReference type="UniProtKB" id="Q15393"/>
    </source>
</evidence>
<evidence type="ECO:0000256" key="2">
    <source>
        <dbReference type="SAM" id="MobiDB-lite"/>
    </source>
</evidence>
<evidence type="ECO:0000269" key="3">
    <source>
    </source>
</evidence>
<evidence type="ECO:0000303" key="4">
    <source>
    </source>
</evidence>
<evidence type="ECO:0000303" key="5">
    <source>
    </source>
</evidence>
<evidence type="ECO:0000305" key="6"/>
<evidence type="ECO:0000312" key="7">
    <source>
        <dbReference type="Araport" id="AT3G55220"/>
    </source>
</evidence>
<evidence type="ECO:0000312" key="8">
    <source>
        <dbReference type="EMBL" id="CAB75756.1"/>
    </source>
</evidence>